<name>QUEF_ECO81</name>
<dbReference type="EC" id="1.7.1.13" evidence="1"/>
<dbReference type="EMBL" id="CU928162">
    <property type="protein sequence ID" value="CAR09407.2"/>
    <property type="molecule type" value="Genomic_DNA"/>
</dbReference>
<dbReference type="RefSeq" id="WP_000100429.1">
    <property type="nucleotide sequence ID" value="NC_011745.1"/>
</dbReference>
<dbReference type="SMR" id="B7MZ90"/>
<dbReference type="KEGG" id="ecq:ECED1_3247"/>
<dbReference type="HOGENOM" id="CLU_054738_0_0_6"/>
<dbReference type="UniPathway" id="UPA00392"/>
<dbReference type="Proteomes" id="UP000000748">
    <property type="component" value="Chromosome"/>
</dbReference>
<dbReference type="GO" id="GO:0005737">
    <property type="term" value="C:cytoplasm"/>
    <property type="evidence" value="ECO:0007669"/>
    <property type="project" value="UniProtKB-SubCell"/>
</dbReference>
<dbReference type="GO" id="GO:0033739">
    <property type="term" value="F:preQ1 synthase activity"/>
    <property type="evidence" value="ECO:0007669"/>
    <property type="project" value="UniProtKB-UniRule"/>
</dbReference>
<dbReference type="GO" id="GO:0008616">
    <property type="term" value="P:queuosine biosynthetic process"/>
    <property type="evidence" value="ECO:0007669"/>
    <property type="project" value="UniProtKB-UniRule"/>
</dbReference>
<dbReference type="GO" id="GO:0006400">
    <property type="term" value="P:tRNA modification"/>
    <property type="evidence" value="ECO:0007669"/>
    <property type="project" value="UniProtKB-UniRule"/>
</dbReference>
<dbReference type="FunFam" id="3.30.1130.10:FF:000004">
    <property type="entry name" value="NADPH-dependent 7-cyano-7-deazaguanine reductase"/>
    <property type="match status" value="1"/>
</dbReference>
<dbReference type="FunFam" id="3.30.1130.10:FF:000006">
    <property type="entry name" value="NADPH-dependent 7-cyano-7-deazaguanine reductase"/>
    <property type="match status" value="1"/>
</dbReference>
<dbReference type="Gene3D" id="3.30.1130.10">
    <property type="match status" value="2"/>
</dbReference>
<dbReference type="HAMAP" id="MF_00817">
    <property type="entry name" value="QueF_type2"/>
    <property type="match status" value="1"/>
</dbReference>
<dbReference type="InterPro" id="IPR043133">
    <property type="entry name" value="GTP-CH-I_C/QueF"/>
</dbReference>
<dbReference type="InterPro" id="IPR050084">
    <property type="entry name" value="NADPH_dep_7-cyano-7-deazaG_red"/>
</dbReference>
<dbReference type="InterPro" id="IPR029500">
    <property type="entry name" value="QueF"/>
</dbReference>
<dbReference type="InterPro" id="IPR029139">
    <property type="entry name" value="QueF_N"/>
</dbReference>
<dbReference type="InterPro" id="IPR016428">
    <property type="entry name" value="QueF_type2"/>
</dbReference>
<dbReference type="NCBIfam" id="TIGR03138">
    <property type="entry name" value="QueF"/>
    <property type="match status" value="1"/>
</dbReference>
<dbReference type="PANTHER" id="PTHR34354">
    <property type="entry name" value="NADPH-DEPENDENT 7-CYANO-7-DEAZAGUANINE REDUCTASE"/>
    <property type="match status" value="1"/>
</dbReference>
<dbReference type="PANTHER" id="PTHR34354:SF1">
    <property type="entry name" value="NADPH-DEPENDENT 7-CYANO-7-DEAZAGUANINE REDUCTASE"/>
    <property type="match status" value="1"/>
</dbReference>
<dbReference type="Pfam" id="PF14489">
    <property type="entry name" value="QueF"/>
    <property type="match status" value="1"/>
</dbReference>
<dbReference type="Pfam" id="PF14819">
    <property type="entry name" value="QueF_N"/>
    <property type="match status" value="1"/>
</dbReference>
<dbReference type="PIRSF" id="PIRSF004750">
    <property type="entry name" value="Nitrile_oxidored_YqcD_prd"/>
    <property type="match status" value="1"/>
</dbReference>
<dbReference type="SUPFAM" id="SSF55620">
    <property type="entry name" value="Tetrahydrobiopterin biosynthesis enzymes-like"/>
    <property type="match status" value="1"/>
</dbReference>
<gene>
    <name evidence="1" type="primary">queF</name>
    <name type="ordered locus">ECED1_3247</name>
</gene>
<keyword id="KW-0963">Cytoplasm</keyword>
<keyword id="KW-0521">NADP</keyword>
<keyword id="KW-0560">Oxidoreductase</keyword>
<keyword id="KW-0671">Queuosine biosynthesis</keyword>
<sequence>MSSYANHQALAGLTLGKSTDYRDTYDASLLQGVPRSLNRDPLGLKADNLPFHGTDIWTLYELSWLNAKGLPQVAVGHVELDYTSVNLIESKSFKLYLNSFNQTRFNNWDEVRQTLERDLSTCAQGKVSVALYRLDELEGQPIGHFNGTCIDDQDITIDNYEFTTDYLENATSGEKVVEETLVSHLLKSNCLITHQPDWGSIQIQYRGRQIDREKLLRYLVSFRHHNEFHEQCVERIFNDLLRFCQPEKLSVYARYTRRGGLDINPWRSNNDFVPSTTRLVRQ</sequence>
<proteinExistence type="inferred from homology"/>
<accession>B7MZ90</accession>
<reference key="1">
    <citation type="journal article" date="2009" name="PLoS Genet.">
        <title>Organised genome dynamics in the Escherichia coli species results in highly diverse adaptive paths.</title>
        <authorList>
            <person name="Touchon M."/>
            <person name="Hoede C."/>
            <person name="Tenaillon O."/>
            <person name="Barbe V."/>
            <person name="Baeriswyl S."/>
            <person name="Bidet P."/>
            <person name="Bingen E."/>
            <person name="Bonacorsi S."/>
            <person name="Bouchier C."/>
            <person name="Bouvet O."/>
            <person name="Calteau A."/>
            <person name="Chiapello H."/>
            <person name="Clermont O."/>
            <person name="Cruveiller S."/>
            <person name="Danchin A."/>
            <person name="Diard M."/>
            <person name="Dossat C."/>
            <person name="Karoui M.E."/>
            <person name="Frapy E."/>
            <person name="Garry L."/>
            <person name="Ghigo J.M."/>
            <person name="Gilles A.M."/>
            <person name="Johnson J."/>
            <person name="Le Bouguenec C."/>
            <person name="Lescat M."/>
            <person name="Mangenot S."/>
            <person name="Martinez-Jehanne V."/>
            <person name="Matic I."/>
            <person name="Nassif X."/>
            <person name="Oztas S."/>
            <person name="Petit M.A."/>
            <person name="Pichon C."/>
            <person name="Rouy Z."/>
            <person name="Ruf C.S."/>
            <person name="Schneider D."/>
            <person name="Tourret J."/>
            <person name="Vacherie B."/>
            <person name="Vallenet D."/>
            <person name="Medigue C."/>
            <person name="Rocha E.P.C."/>
            <person name="Denamur E."/>
        </authorList>
    </citation>
    <scope>NUCLEOTIDE SEQUENCE [LARGE SCALE GENOMIC DNA]</scope>
    <source>
        <strain>ED1a</strain>
    </source>
</reference>
<feature type="chain" id="PRO_1000213060" description="NADPH-dependent 7-cyano-7-deazaguanine reductase">
    <location>
        <begin position="1"/>
        <end position="282"/>
    </location>
</feature>
<feature type="active site" description="Thioimide intermediate" evidence="1">
    <location>
        <position position="190"/>
    </location>
</feature>
<feature type="active site" description="Proton donor" evidence="1">
    <location>
        <position position="197"/>
    </location>
</feature>
<feature type="binding site" evidence="1">
    <location>
        <begin position="88"/>
        <end position="90"/>
    </location>
    <ligand>
        <name>substrate</name>
    </ligand>
</feature>
<feature type="binding site" evidence="1">
    <location>
        <begin position="90"/>
        <end position="91"/>
    </location>
    <ligand>
        <name>NADPH</name>
        <dbReference type="ChEBI" id="CHEBI:57783"/>
    </ligand>
</feature>
<feature type="binding site" evidence="1">
    <location>
        <begin position="229"/>
        <end position="230"/>
    </location>
    <ligand>
        <name>substrate</name>
    </ligand>
</feature>
<feature type="binding site" evidence="1">
    <location>
        <begin position="258"/>
        <end position="259"/>
    </location>
    <ligand>
        <name>NADPH</name>
        <dbReference type="ChEBI" id="CHEBI:57783"/>
    </ligand>
</feature>
<protein>
    <recommendedName>
        <fullName evidence="1">NADPH-dependent 7-cyano-7-deazaguanine reductase</fullName>
        <ecNumber evidence="1">1.7.1.13</ecNumber>
    </recommendedName>
    <alternativeName>
        <fullName evidence="1">7-cyano-7-carbaguanine reductase</fullName>
    </alternativeName>
    <alternativeName>
        <fullName evidence="1">NADPH-dependent nitrile oxidoreductase</fullName>
    </alternativeName>
    <alternativeName>
        <fullName evidence="1">PreQ(0) reductase</fullName>
    </alternativeName>
</protein>
<comment type="function">
    <text evidence="1">Catalyzes the NADPH-dependent reduction of 7-cyano-7-deazaguanine (preQ0) to 7-aminomethyl-7-deazaguanine (preQ1).</text>
</comment>
<comment type="catalytic activity">
    <reaction evidence="1">
        <text>7-aminomethyl-7-carbaguanine + 2 NADP(+) = 7-cyano-7-deazaguanine + 2 NADPH + 3 H(+)</text>
        <dbReference type="Rhea" id="RHEA:13409"/>
        <dbReference type="ChEBI" id="CHEBI:15378"/>
        <dbReference type="ChEBI" id="CHEBI:45075"/>
        <dbReference type="ChEBI" id="CHEBI:57783"/>
        <dbReference type="ChEBI" id="CHEBI:58349"/>
        <dbReference type="ChEBI" id="CHEBI:58703"/>
        <dbReference type="EC" id="1.7.1.13"/>
    </reaction>
</comment>
<comment type="pathway">
    <text evidence="1">tRNA modification; tRNA-queuosine biosynthesis.</text>
</comment>
<comment type="subunit">
    <text evidence="1">Homodimer.</text>
</comment>
<comment type="subcellular location">
    <subcellularLocation>
        <location evidence="1">Cytoplasm</location>
    </subcellularLocation>
</comment>
<comment type="similarity">
    <text evidence="1">Belongs to the GTP cyclohydrolase I family. QueF type 2 subfamily.</text>
</comment>
<organism>
    <name type="scientific">Escherichia coli O81 (strain ED1a)</name>
    <dbReference type="NCBI Taxonomy" id="585397"/>
    <lineage>
        <taxon>Bacteria</taxon>
        <taxon>Pseudomonadati</taxon>
        <taxon>Pseudomonadota</taxon>
        <taxon>Gammaproteobacteria</taxon>
        <taxon>Enterobacterales</taxon>
        <taxon>Enterobacteriaceae</taxon>
        <taxon>Escherichia</taxon>
    </lineage>
</organism>
<evidence type="ECO:0000255" key="1">
    <source>
        <dbReference type="HAMAP-Rule" id="MF_00817"/>
    </source>
</evidence>